<gene>
    <name evidence="1" type="primary">clpX</name>
    <name type="ordered locus">GbCGDNIH1_1306</name>
</gene>
<keyword id="KW-0067">ATP-binding</keyword>
<keyword id="KW-0143">Chaperone</keyword>
<keyword id="KW-0479">Metal-binding</keyword>
<keyword id="KW-0547">Nucleotide-binding</keyword>
<keyword id="KW-1185">Reference proteome</keyword>
<keyword id="KW-0862">Zinc</keyword>
<accession>Q0BSJ8</accession>
<protein>
    <recommendedName>
        <fullName evidence="1">ATP-dependent Clp protease ATP-binding subunit ClpX</fullName>
    </recommendedName>
</protein>
<dbReference type="EMBL" id="CP000394">
    <property type="protein sequence ID" value="ABI62204.1"/>
    <property type="molecule type" value="Genomic_DNA"/>
</dbReference>
<dbReference type="SMR" id="Q0BSJ8"/>
<dbReference type="STRING" id="391165.GbCGDNIH1_1306"/>
<dbReference type="KEGG" id="gbe:GbCGDNIH1_1306"/>
<dbReference type="eggNOG" id="COG1219">
    <property type="taxonomic scope" value="Bacteria"/>
</dbReference>
<dbReference type="HOGENOM" id="CLU_014218_8_2_5"/>
<dbReference type="Proteomes" id="UP000001963">
    <property type="component" value="Chromosome"/>
</dbReference>
<dbReference type="GO" id="GO:0009376">
    <property type="term" value="C:HslUV protease complex"/>
    <property type="evidence" value="ECO:0007669"/>
    <property type="project" value="TreeGrafter"/>
</dbReference>
<dbReference type="GO" id="GO:0005524">
    <property type="term" value="F:ATP binding"/>
    <property type="evidence" value="ECO:0007669"/>
    <property type="project" value="UniProtKB-UniRule"/>
</dbReference>
<dbReference type="GO" id="GO:0016887">
    <property type="term" value="F:ATP hydrolysis activity"/>
    <property type="evidence" value="ECO:0007669"/>
    <property type="project" value="InterPro"/>
</dbReference>
<dbReference type="GO" id="GO:0140662">
    <property type="term" value="F:ATP-dependent protein folding chaperone"/>
    <property type="evidence" value="ECO:0007669"/>
    <property type="project" value="InterPro"/>
</dbReference>
<dbReference type="GO" id="GO:0046983">
    <property type="term" value="F:protein dimerization activity"/>
    <property type="evidence" value="ECO:0007669"/>
    <property type="project" value="InterPro"/>
</dbReference>
<dbReference type="GO" id="GO:0051082">
    <property type="term" value="F:unfolded protein binding"/>
    <property type="evidence" value="ECO:0007669"/>
    <property type="project" value="UniProtKB-UniRule"/>
</dbReference>
<dbReference type="GO" id="GO:0008270">
    <property type="term" value="F:zinc ion binding"/>
    <property type="evidence" value="ECO:0007669"/>
    <property type="project" value="InterPro"/>
</dbReference>
<dbReference type="GO" id="GO:0051301">
    <property type="term" value="P:cell division"/>
    <property type="evidence" value="ECO:0007669"/>
    <property type="project" value="TreeGrafter"/>
</dbReference>
<dbReference type="GO" id="GO:0051603">
    <property type="term" value="P:proteolysis involved in protein catabolic process"/>
    <property type="evidence" value="ECO:0007669"/>
    <property type="project" value="TreeGrafter"/>
</dbReference>
<dbReference type="CDD" id="cd19497">
    <property type="entry name" value="RecA-like_ClpX"/>
    <property type="match status" value="1"/>
</dbReference>
<dbReference type="FunFam" id="1.10.8.60:FF:000002">
    <property type="entry name" value="ATP-dependent Clp protease ATP-binding subunit ClpX"/>
    <property type="match status" value="1"/>
</dbReference>
<dbReference type="FunFam" id="3.40.50.300:FF:000005">
    <property type="entry name" value="ATP-dependent Clp protease ATP-binding subunit ClpX"/>
    <property type="match status" value="1"/>
</dbReference>
<dbReference type="Gene3D" id="1.10.8.60">
    <property type="match status" value="1"/>
</dbReference>
<dbReference type="Gene3D" id="6.20.220.10">
    <property type="entry name" value="ClpX chaperone, C4-type zinc finger domain"/>
    <property type="match status" value="1"/>
</dbReference>
<dbReference type="Gene3D" id="3.40.50.300">
    <property type="entry name" value="P-loop containing nucleotide triphosphate hydrolases"/>
    <property type="match status" value="1"/>
</dbReference>
<dbReference type="HAMAP" id="MF_00175">
    <property type="entry name" value="ClpX"/>
    <property type="match status" value="1"/>
</dbReference>
<dbReference type="InterPro" id="IPR003593">
    <property type="entry name" value="AAA+_ATPase"/>
</dbReference>
<dbReference type="InterPro" id="IPR050052">
    <property type="entry name" value="ATP-dep_Clp_protease_ClpX"/>
</dbReference>
<dbReference type="InterPro" id="IPR003959">
    <property type="entry name" value="ATPase_AAA_core"/>
</dbReference>
<dbReference type="InterPro" id="IPR019489">
    <property type="entry name" value="Clp_ATPase_C"/>
</dbReference>
<dbReference type="InterPro" id="IPR004487">
    <property type="entry name" value="Clp_protease_ATP-bd_su_ClpX"/>
</dbReference>
<dbReference type="InterPro" id="IPR046425">
    <property type="entry name" value="ClpX_bact"/>
</dbReference>
<dbReference type="InterPro" id="IPR027417">
    <property type="entry name" value="P-loop_NTPase"/>
</dbReference>
<dbReference type="InterPro" id="IPR010603">
    <property type="entry name" value="Znf_CppX_C4"/>
</dbReference>
<dbReference type="InterPro" id="IPR038366">
    <property type="entry name" value="Znf_CppX_C4_sf"/>
</dbReference>
<dbReference type="NCBIfam" id="TIGR00382">
    <property type="entry name" value="clpX"/>
    <property type="match status" value="1"/>
</dbReference>
<dbReference type="NCBIfam" id="NF003745">
    <property type="entry name" value="PRK05342.1"/>
    <property type="match status" value="1"/>
</dbReference>
<dbReference type="PANTHER" id="PTHR48102:SF7">
    <property type="entry name" value="ATP-DEPENDENT CLP PROTEASE ATP-BINDING SUBUNIT CLPX-LIKE, MITOCHONDRIAL"/>
    <property type="match status" value="1"/>
</dbReference>
<dbReference type="PANTHER" id="PTHR48102">
    <property type="entry name" value="ATP-DEPENDENT CLP PROTEASE ATP-BINDING SUBUNIT CLPX-LIKE, MITOCHONDRIAL-RELATED"/>
    <property type="match status" value="1"/>
</dbReference>
<dbReference type="Pfam" id="PF07724">
    <property type="entry name" value="AAA_2"/>
    <property type="match status" value="1"/>
</dbReference>
<dbReference type="Pfam" id="PF10431">
    <property type="entry name" value="ClpB_D2-small"/>
    <property type="match status" value="1"/>
</dbReference>
<dbReference type="Pfam" id="PF06689">
    <property type="entry name" value="zf-C4_ClpX"/>
    <property type="match status" value="1"/>
</dbReference>
<dbReference type="SMART" id="SM00382">
    <property type="entry name" value="AAA"/>
    <property type="match status" value="1"/>
</dbReference>
<dbReference type="SMART" id="SM01086">
    <property type="entry name" value="ClpB_D2-small"/>
    <property type="match status" value="1"/>
</dbReference>
<dbReference type="SMART" id="SM00994">
    <property type="entry name" value="zf-C4_ClpX"/>
    <property type="match status" value="1"/>
</dbReference>
<dbReference type="SUPFAM" id="SSF57716">
    <property type="entry name" value="Glucocorticoid receptor-like (DNA-binding domain)"/>
    <property type="match status" value="1"/>
</dbReference>
<dbReference type="SUPFAM" id="SSF52540">
    <property type="entry name" value="P-loop containing nucleoside triphosphate hydrolases"/>
    <property type="match status" value="1"/>
</dbReference>
<dbReference type="PROSITE" id="PS51902">
    <property type="entry name" value="CLPX_ZB"/>
    <property type="match status" value="1"/>
</dbReference>
<reference key="1">
    <citation type="journal article" date="2007" name="J. Bacteriol.">
        <title>Genome sequence analysis of the emerging human pathogenic acetic acid bacterium Granulibacter bethesdensis.</title>
        <authorList>
            <person name="Greenberg D.E."/>
            <person name="Porcella S.F."/>
            <person name="Zelazny A.M."/>
            <person name="Virtaneva K."/>
            <person name="Sturdevant D.E."/>
            <person name="Kupko J.J. III"/>
            <person name="Barbian K.D."/>
            <person name="Babar A."/>
            <person name="Dorward D.W."/>
            <person name="Holland S.M."/>
        </authorList>
    </citation>
    <scope>NUCLEOTIDE SEQUENCE [LARGE SCALE GENOMIC DNA]</scope>
    <source>
        <strain>ATCC BAA-1260 / CGDNIH1</strain>
    </source>
</reference>
<proteinExistence type="inferred from homology"/>
<name>CLPX_GRABC</name>
<comment type="function">
    <text evidence="1">ATP-dependent specificity component of the Clp protease. It directs the protease to specific substrates. Can perform chaperone functions in the absence of ClpP.</text>
</comment>
<comment type="subunit">
    <text evidence="1">Component of the ClpX-ClpP complex. Forms a hexameric ring that, in the presence of ATP, binds to fourteen ClpP subunits assembled into a disk-like structure with a central cavity, resembling the structure of eukaryotic proteasomes.</text>
</comment>
<comment type="similarity">
    <text evidence="1">Belongs to the ClpX chaperone family.</text>
</comment>
<sequence>MLMTKSGDSKNTLYCSFCGKSQHEVRKLIAGPTVFICDECVELCMDIIREENKTHLVKSRDGVPTPKEICKVLDDYVIGQAHAKKVLSVAVHNHYKRLAHGQKNNDIEIGKSNIMLIGPTGSGKTLLAQTLARILDVPFTMADATTLTEAGYVGEDVENIILKLLQAADYNVERAQRGIVYIDEVDKISRKSDNPSITRDVSGEGVQQALLKIMEGTVASVPPQGGRKHPQQEFLQVDTTNILFICGGAFAGLEKIIGSRGKGGGIGYGAEVRDPDERRTGEILREVEPEDLLRFGLIPEFIGRLPVVATLEDLDEAALIEILTKPKNALVKQYGRLFEMEGVSLSFTDDALKSVANRAIARKTGARGLRSILEGILLGTMYDLPGMENVEEVVINGEVAEGRAAPLMTYGPEERAEESA</sequence>
<evidence type="ECO:0000255" key="1">
    <source>
        <dbReference type="HAMAP-Rule" id="MF_00175"/>
    </source>
</evidence>
<evidence type="ECO:0000255" key="2">
    <source>
        <dbReference type="PROSITE-ProRule" id="PRU01250"/>
    </source>
</evidence>
<organism>
    <name type="scientific">Granulibacter bethesdensis (strain ATCC BAA-1260 / CGDNIH1)</name>
    <dbReference type="NCBI Taxonomy" id="391165"/>
    <lineage>
        <taxon>Bacteria</taxon>
        <taxon>Pseudomonadati</taxon>
        <taxon>Pseudomonadota</taxon>
        <taxon>Alphaproteobacteria</taxon>
        <taxon>Acetobacterales</taxon>
        <taxon>Acetobacteraceae</taxon>
        <taxon>Granulibacter</taxon>
    </lineage>
</organism>
<feature type="chain" id="PRO_1000024563" description="ATP-dependent Clp protease ATP-binding subunit ClpX">
    <location>
        <begin position="1"/>
        <end position="420"/>
    </location>
</feature>
<feature type="domain" description="ClpX-type ZB" evidence="2">
    <location>
        <begin position="3"/>
        <end position="56"/>
    </location>
</feature>
<feature type="binding site" evidence="2">
    <location>
        <position position="15"/>
    </location>
    <ligand>
        <name>Zn(2+)</name>
        <dbReference type="ChEBI" id="CHEBI:29105"/>
    </ligand>
</feature>
<feature type="binding site" evidence="2">
    <location>
        <position position="18"/>
    </location>
    <ligand>
        <name>Zn(2+)</name>
        <dbReference type="ChEBI" id="CHEBI:29105"/>
    </ligand>
</feature>
<feature type="binding site" evidence="2">
    <location>
        <position position="37"/>
    </location>
    <ligand>
        <name>Zn(2+)</name>
        <dbReference type="ChEBI" id="CHEBI:29105"/>
    </ligand>
</feature>
<feature type="binding site" evidence="2">
    <location>
        <position position="40"/>
    </location>
    <ligand>
        <name>Zn(2+)</name>
        <dbReference type="ChEBI" id="CHEBI:29105"/>
    </ligand>
</feature>
<feature type="binding site" evidence="1">
    <location>
        <begin position="119"/>
        <end position="126"/>
    </location>
    <ligand>
        <name>ATP</name>
        <dbReference type="ChEBI" id="CHEBI:30616"/>
    </ligand>
</feature>